<dbReference type="EMBL" id="X17123">
    <property type="protein sequence ID" value="CAA34983.1"/>
    <property type="molecule type" value="Genomic_DNA"/>
</dbReference>
<dbReference type="PIR" id="S10228">
    <property type="entry name" value="S10228"/>
</dbReference>
<dbReference type="SMR" id="P17969"/>
<dbReference type="GO" id="GO:0005102">
    <property type="term" value="F:signaling receptor binding"/>
    <property type="evidence" value="ECO:0007669"/>
    <property type="project" value="InterPro"/>
</dbReference>
<dbReference type="GO" id="GO:0090729">
    <property type="term" value="F:toxin activity"/>
    <property type="evidence" value="ECO:0007669"/>
    <property type="project" value="UniProtKB-KW"/>
</dbReference>
<dbReference type="GO" id="GO:0030435">
    <property type="term" value="P:sporulation resulting in formation of a cellular spore"/>
    <property type="evidence" value="ECO:0007669"/>
    <property type="project" value="UniProtKB-KW"/>
</dbReference>
<dbReference type="GO" id="GO:0001907">
    <property type="term" value="P:symbiont-mediated killing of host cell"/>
    <property type="evidence" value="ECO:0007669"/>
    <property type="project" value="InterPro"/>
</dbReference>
<dbReference type="CDD" id="cd04085">
    <property type="entry name" value="delta_endotoxin_C"/>
    <property type="match status" value="1"/>
</dbReference>
<dbReference type="Gene3D" id="2.60.120.260">
    <property type="entry name" value="Galactose-binding domain-like"/>
    <property type="match status" value="1"/>
</dbReference>
<dbReference type="Gene3D" id="2.100.10.10">
    <property type="entry name" value="Pesticidal crystal protein, central domain"/>
    <property type="match status" value="1"/>
</dbReference>
<dbReference type="Gene3D" id="1.20.190.10">
    <property type="entry name" value="Pesticidal crystal protein, N-terminal domain"/>
    <property type="match status" value="1"/>
</dbReference>
<dbReference type="InterPro" id="IPR008979">
    <property type="entry name" value="Galactose-bd-like_sf"/>
</dbReference>
<dbReference type="InterPro" id="IPR038979">
    <property type="entry name" value="Pest_crys"/>
</dbReference>
<dbReference type="InterPro" id="IPR005638">
    <property type="entry name" value="Pest_crys_dom-III"/>
</dbReference>
<dbReference type="InterPro" id="IPR005639">
    <property type="entry name" value="Pest_crys_dom_I"/>
</dbReference>
<dbReference type="InterPro" id="IPR036716">
    <property type="entry name" value="Pest_crys_N_sf"/>
</dbReference>
<dbReference type="InterPro" id="IPR036399">
    <property type="entry name" value="Pest_cryst_cen_dom_sf"/>
</dbReference>
<dbReference type="InterPro" id="IPR001178">
    <property type="entry name" value="Pest_cryst_dom_II"/>
</dbReference>
<dbReference type="PANTHER" id="PTHR37003">
    <property type="entry name" value="ENDOTOXIN_N DOMAIN-CONTAINING PROTEIN-RELATED"/>
    <property type="match status" value="1"/>
</dbReference>
<dbReference type="PANTHER" id="PTHR37003:SF2">
    <property type="entry name" value="PESTICIDAL CRYSTAL PROTEIN N-TERMINAL DOMAIN-CONTAINING PROTEIN"/>
    <property type="match status" value="1"/>
</dbReference>
<dbReference type="Pfam" id="PF03944">
    <property type="entry name" value="Endotoxin_C"/>
    <property type="match status" value="1"/>
</dbReference>
<dbReference type="Pfam" id="PF00555">
    <property type="entry name" value="Endotoxin_M"/>
    <property type="match status" value="1"/>
</dbReference>
<dbReference type="Pfam" id="PF03945">
    <property type="entry name" value="Endotoxin_N"/>
    <property type="match status" value="1"/>
</dbReference>
<dbReference type="SUPFAM" id="SSF51096">
    <property type="entry name" value="delta-Endotoxin (insectocide), middle domain"/>
    <property type="match status" value="1"/>
</dbReference>
<dbReference type="SUPFAM" id="SSF56849">
    <property type="entry name" value="delta-Endotoxin (insectocide), N-terminal domain"/>
    <property type="match status" value="1"/>
</dbReference>
<dbReference type="SUPFAM" id="SSF49785">
    <property type="entry name" value="Galactose-binding domain-like"/>
    <property type="match status" value="1"/>
</dbReference>
<gene>
    <name type="primary">cry3Ba</name>
    <name type="synonym">cryIIIb</name>
    <name type="synonym">cryIIIB(a)</name>
</gene>
<keyword id="KW-0749">Sporulation</keyword>
<keyword id="KW-0800">Toxin</keyword>
<keyword id="KW-0843">Virulence</keyword>
<accession>P17969</accession>
<feature type="chain" id="PRO_0000174060" description="Pesticidal crystal protein Cry3Ba">
    <location>
        <begin position="1"/>
        <end position="659"/>
    </location>
</feature>
<feature type="region of interest" description="Disordered" evidence="1">
    <location>
        <begin position="1"/>
        <end position="41"/>
    </location>
</feature>
<feature type="compositionally biased region" description="Polar residues" evidence="1">
    <location>
        <begin position="22"/>
        <end position="41"/>
    </location>
</feature>
<organism>
    <name type="scientific">Bacillus thuringiensis subsp. tolworthi</name>
    <dbReference type="NCBI Taxonomy" id="1442"/>
    <lineage>
        <taxon>Bacteria</taxon>
        <taxon>Bacillati</taxon>
        <taxon>Bacillota</taxon>
        <taxon>Bacilli</taxon>
        <taxon>Bacillales</taxon>
        <taxon>Bacillaceae</taxon>
        <taxon>Bacillus</taxon>
        <taxon>Bacillus cereus group</taxon>
    </lineage>
</organism>
<comment type="function">
    <text>Promotes colloidosmotic lysis by binding to the midgut epithelial cells of Coleoptera.</text>
</comment>
<comment type="developmental stage">
    <text>The crystal protein is produced during sporulation and is accumulated both as an inclusion and as part of the spore coat.</text>
</comment>
<comment type="miscellaneous">
    <text>Toxic segment of the protein is located in the N-terminus.</text>
</comment>
<comment type="similarity">
    <text evidence="2">Belongs to the delta endotoxin family.</text>
</comment>
<proteinExistence type="evidence at transcript level"/>
<sequence>MIRMGGRKMNPNNRSEYDTIKVTPNSELPTNHNQYPLADNPNSTLEELNYKEFLRMTADNSTEVLDSSTVKDAVGTGISVVGQILGVVGVPFAGALTSFYQSFLNAIWPSDADPWKAFMAQVEVLIDKKIEEYAKSKALAELQGLQNNFEDYVNALDSWKKAPVNLRSRRSQDRIRELFSQAESHFRNSMPSFAVSKFEVLFLPTYAQAANTHLLLLKDAQVFGEEWGYSSEDIAEFYQRQLKLTQQYTDHCVNWYNVGLNSLRGSTYDAWVKFNRFRREMTLTVLDLIVLFPFYDVRLYSKGVKTELTRDIFTDPIFTLNALQEYGPTFSSIENSIRKPHLFDYLRGIEFHTRLRPGYSGKDSFNYWSGNYVETRPSIGSNDTITSPFYGDKSIEPIQKLSFDGQKVYRTIANTDIAAFPDGKIYFGVTKVDFSQYDDQKNETSTQTYDSKRYNGYLGAQDSIDQLPPETTDEPLEKAYSHQLNYAECFLMQDRRGTIPFFTWTHRSVDFFNTIDAEKITQLPVVKAYALSSGASIIEGPGFTGGNLLFLKESSNSIAKFKVTLNSAALLQRYRVRIRYASTTNLRLFVQNSNNDFLVIYINKTMNIDGDLTYQTFDFATSNSNMGFSGDTNDFIIGAESFVSNEKIYIDKIEFIPVQ</sequence>
<evidence type="ECO:0000256" key="1">
    <source>
        <dbReference type="SAM" id="MobiDB-lite"/>
    </source>
</evidence>
<evidence type="ECO:0000305" key="2"/>
<name>CR3BA_BACTO</name>
<reference key="1">
    <citation type="journal article" date="1990" name="Nucleic Acids Res.">
        <title>Nucleotide sequence of a coleopteran-active toxin gene from a new isolate of Bacillus thuringiensis subsp. tolworthi.</title>
        <authorList>
            <person name="Sick A."/>
            <person name="Gaertner F.H."/>
            <person name="Wong A."/>
        </authorList>
    </citation>
    <scope>NUCLEOTIDE SEQUENCE [GENOMIC DNA]</scope>
    <source>
        <strain>43F</strain>
    </source>
</reference>
<protein>
    <recommendedName>
        <fullName>Pesticidal crystal protein Cry3Ba</fullName>
    </recommendedName>
    <alternativeName>
        <fullName>75 kDa crystal protein</fullName>
    </alternativeName>
    <alternativeName>
        <fullName>Crystaline entomocidal protoxin</fullName>
    </alternativeName>
    <alternativeName>
        <fullName>Insecticidal delta-endotoxin CryIIIB(a)</fullName>
    </alternativeName>
</protein>